<gene>
    <name evidence="5" type="ordered locus">At3g28520</name>
    <name evidence="6" type="ORF">T20D4.3</name>
</gene>
<keyword id="KW-0067">ATP-binding</keyword>
<keyword id="KW-0378">Hydrolase</keyword>
<keyword id="KW-0460">Magnesium</keyword>
<keyword id="KW-0472">Membrane</keyword>
<keyword id="KW-0547">Nucleotide-binding</keyword>
<keyword id="KW-1185">Reference proteome</keyword>
<keyword id="KW-0812">Transmembrane</keyword>
<keyword id="KW-1133">Transmembrane helix</keyword>
<reference key="1">
    <citation type="journal article" date="2000" name="DNA Res.">
        <title>Structural analysis of Arabidopsis thaliana chromosome 3. II. Sequence features of the 4,251,695 bp regions covered by 90 P1, TAC and BAC clones.</title>
        <authorList>
            <person name="Kaneko T."/>
            <person name="Katoh T."/>
            <person name="Sato S."/>
            <person name="Nakamura Y."/>
            <person name="Asamizu E."/>
            <person name="Tabata S."/>
        </authorList>
    </citation>
    <scope>NUCLEOTIDE SEQUENCE [LARGE SCALE GENOMIC DNA]</scope>
    <source>
        <strain>cv. Columbia</strain>
    </source>
</reference>
<reference key="2">
    <citation type="journal article" date="2017" name="Plant J.">
        <title>Araport11: a complete reannotation of the Arabidopsis thaliana reference genome.</title>
        <authorList>
            <person name="Cheng C.Y."/>
            <person name="Krishnakumar V."/>
            <person name="Chan A.P."/>
            <person name="Thibaud-Nissen F."/>
            <person name="Schobel S."/>
            <person name="Town C.D."/>
        </authorList>
    </citation>
    <scope>GENOME REANNOTATION</scope>
    <source>
        <strain>cv. Columbia</strain>
    </source>
</reference>
<name>AATP6_ARATH</name>
<proteinExistence type="inferred from homology"/>
<organism>
    <name type="scientific">Arabidopsis thaliana</name>
    <name type="common">Mouse-ear cress</name>
    <dbReference type="NCBI Taxonomy" id="3702"/>
    <lineage>
        <taxon>Eukaryota</taxon>
        <taxon>Viridiplantae</taxon>
        <taxon>Streptophyta</taxon>
        <taxon>Embryophyta</taxon>
        <taxon>Tracheophyta</taxon>
        <taxon>Spermatophyta</taxon>
        <taxon>Magnoliopsida</taxon>
        <taxon>eudicotyledons</taxon>
        <taxon>Gunneridae</taxon>
        <taxon>Pentapetalae</taxon>
        <taxon>rosids</taxon>
        <taxon>malvids</taxon>
        <taxon>Brassicales</taxon>
        <taxon>Brassicaceae</taxon>
        <taxon>Camelineae</taxon>
        <taxon>Arabidopsis</taxon>
    </lineage>
</organism>
<evidence type="ECO:0000250" key="1">
    <source>
        <dbReference type="UniProtKB" id="Q9FLD5"/>
    </source>
</evidence>
<evidence type="ECO:0000255" key="2"/>
<evidence type="ECO:0000256" key="3">
    <source>
        <dbReference type="SAM" id="MobiDB-lite"/>
    </source>
</evidence>
<evidence type="ECO:0000305" key="4"/>
<evidence type="ECO:0000312" key="5">
    <source>
        <dbReference type="EMBL" id="AEE77455.1"/>
    </source>
</evidence>
<evidence type="ECO:0000312" key="6">
    <source>
        <dbReference type="EMBL" id="BAB01954.1"/>
    </source>
</evidence>
<accession>Q9LH83</accession>
<accession>F4J0B1</accession>
<comment type="catalytic activity">
    <reaction evidence="1">
        <text>ATP + H2O = ADP + phosphate + H(+)</text>
        <dbReference type="Rhea" id="RHEA:13065"/>
        <dbReference type="ChEBI" id="CHEBI:15377"/>
        <dbReference type="ChEBI" id="CHEBI:15378"/>
        <dbReference type="ChEBI" id="CHEBI:30616"/>
        <dbReference type="ChEBI" id="CHEBI:43474"/>
        <dbReference type="ChEBI" id="CHEBI:456216"/>
    </reaction>
</comment>
<comment type="cofactor">
    <cofactor evidence="1">
        <name>Mg(2+)</name>
        <dbReference type="ChEBI" id="CHEBI:18420"/>
    </cofactor>
</comment>
<comment type="subcellular location">
    <subcellularLocation>
        <location evidence="2">Membrane</location>
        <topology evidence="2">Single-pass membrane protein</topology>
    </subcellularLocation>
</comment>
<comment type="similarity">
    <text evidence="4">Belongs to the AAA ATPase family. BCS1 subfamily.</text>
</comment>
<comment type="sequence caution" evidence="4">
    <conflict type="erroneous initiation">
        <sequence resource="EMBL-CDS" id="AEE77455"/>
    </conflict>
    <text>Truncated N-terminus.</text>
</comment>
<feature type="chain" id="PRO_0000434708" description="AAA-ATPase At3g28520">
    <location>
        <begin position="1"/>
        <end position="492"/>
    </location>
</feature>
<feature type="transmembrane region" description="Helical" evidence="2">
    <location>
        <begin position="7"/>
        <end position="25"/>
    </location>
</feature>
<feature type="region of interest" description="Disordered" evidence="3">
    <location>
        <begin position="313"/>
        <end position="334"/>
    </location>
</feature>
<feature type="region of interest" description="Disordered" evidence="3">
    <location>
        <begin position="462"/>
        <end position="492"/>
    </location>
</feature>
<feature type="compositionally biased region" description="Basic and acidic residues" evidence="3">
    <location>
        <begin position="323"/>
        <end position="332"/>
    </location>
</feature>
<feature type="compositionally biased region" description="Basic and acidic residues" evidence="3">
    <location>
        <begin position="462"/>
        <end position="484"/>
    </location>
</feature>
<feature type="binding site" evidence="2">
    <location>
        <begin position="249"/>
        <end position="256"/>
    </location>
    <ligand>
        <name>ATP</name>
        <dbReference type="ChEBI" id="CHEBI:30616"/>
    </ligand>
</feature>
<dbReference type="EC" id="3.6.1.-" evidence="1"/>
<dbReference type="EMBL" id="AP002059">
    <property type="protein sequence ID" value="BAB01954.1"/>
    <property type="molecule type" value="Genomic_DNA"/>
</dbReference>
<dbReference type="EMBL" id="CP002686">
    <property type="protein sequence ID" value="AEE77455.1"/>
    <property type="status" value="ALT_INIT"/>
    <property type="molecule type" value="Genomic_DNA"/>
</dbReference>
<dbReference type="RefSeq" id="NP_189493.1">
    <property type="nucleotide sequence ID" value="NM_113772.1"/>
</dbReference>
<dbReference type="SMR" id="Q9LH83"/>
<dbReference type="FunCoup" id="Q9LH83">
    <property type="interactions" value="1322"/>
</dbReference>
<dbReference type="STRING" id="3702.Q9LH83"/>
<dbReference type="PaxDb" id="3702-AT3G28520.1"/>
<dbReference type="PeptideAtlas" id="Q9LH83"/>
<dbReference type="GeneID" id="822482"/>
<dbReference type="KEGG" id="ath:AT3G28520"/>
<dbReference type="Araport" id="AT3G28520"/>
<dbReference type="TAIR" id="AT3G28520"/>
<dbReference type="eggNOG" id="KOG0743">
    <property type="taxonomic scope" value="Eukaryota"/>
</dbReference>
<dbReference type="InParanoid" id="Q9LH83"/>
<dbReference type="PhylomeDB" id="Q9LH83"/>
<dbReference type="PRO" id="PR:Q9LH83"/>
<dbReference type="Proteomes" id="UP000006548">
    <property type="component" value="Chromosome 3"/>
</dbReference>
<dbReference type="ExpressionAtlas" id="Q9LH83">
    <property type="expression patterns" value="baseline and differential"/>
</dbReference>
<dbReference type="GO" id="GO:0016020">
    <property type="term" value="C:membrane"/>
    <property type="evidence" value="ECO:0007669"/>
    <property type="project" value="UniProtKB-SubCell"/>
</dbReference>
<dbReference type="GO" id="GO:0005739">
    <property type="term" value="C:mitochondrion"/>
    <property type="evidence" value="ECO:0007005"/>
    <property type="project" value="TAIR"/>
</dbReference>
<dbReference type="GO" id="GO:0009506">
    <property type="term" value="C:plasmodesma"/>
    <property type="evidence" value="ECO:0007005"/>
    <property type="project" value="TAIR"/>
</dbReference>
<dbReference type="GO" id="GO:0005524">
    <property type="term" value="F:ATP binding"/>
    <property type="evidence" value="ECO:0007669"/>
    <property type="project" value="UniProtKB-KW"/>
</dbReference>
<dbReference type="GO" id="GO:0016887">
    <property type="term" value="F:ATP hydrolysis activity"/>
    <property type="evidence" value="ECO:0007669"/>
    <property type="project" value="InterPro"/>
</dbReference>
<dbReference type="GO" id="GO:0006950">
    <property type="term" value="P:response to stress"/>
    <property type="evidence" value="ECO:0007669"/>
    <property type="project" value="UniProtKB-ARBA"/>
</dbReference>
<dbReference type="CDD" id="cd19510">
    <property type="entry name" value="RecA-like_BCS1"/>
    <property type="match status" value="1"/>
</dbReference>
<dbReference type="FunFam" id="3.40.50.300:FF:001122">
    <property type="entry name" value="AAA-ATPase ASD, mitochondrial"/>
    <property type="match status" value="1"/>
</dbReference>
<dbReference type="Gene3D" id="6.10.280.40">
    <property type="match status" value="1"/>
</dbReference>
<dbReference type="Gene3D" id="3.40.50.300">
    <property type="entry name" value="P-loop containing nucleotide triphosphate hydrolases"/>
    <property type="match status" value="1"/>
</dbReference>
<dbReference type="InterPro" id="IPR003593">
    <property type="entry name" value="AAA+_ATPase"/>
</dbReference>
<dbReference type="InterPro" id="IPR025753">
    <property type="entry name" value="AAA_N_dom"/>
</dbReference>
<dbReference type="InterPro" id="IPR003959">
    <property type="entry name" value="ATPase_AAA_core"/>
</dbReference>
<dbReference type="InterPro" id="IPR050747">
    <property type="entry name" value="Mitochondrial_chaperone_BCS1"/>
</dbReference>
<dbReference type="InterPro" id="IPR027417">
    <property type="entry name" value="P-loop_NTPase"/>
</dbReference>
<dbReference type="PANTHER" id="PTHR23070">
    <property type="entry name" value="BCS1 AAA-TYPE ATPASE"/>
    <property type="match status" value="1"/>
</dbReference>
<dbReference type="Pfam" id="PF00004">
    <property type="entry name" value="AAA"/>
    <property type="match status" value="1"/>
</dbReference>
<dbReference type="Pfam" id="PF14363">
    <property type="entry name" value="AAA_assoc"/>
    <property type="match status" value="1"/>
</dbReference>
<dbReference type="SMART" id="SM00382">
    <property type="entry name" value="AAA"/>
    <property type="match status" value="1"/>
</dbReference>
<dbReference type="SUPFAM" id="SSF52540">
    <property type="entry name" value="P-loop containing nucleoside triphosphate hydrolases"/>
    <property type="match status" value="1"/>
</dbReference>
<protein>
    <recommendedName>
        <fullName>AAA-ATPase At3g28520</fullName>
        <ecNumber evidence="1">3.6.1.-</ecNumber>
    </recommendedName>
</protein>
<sequence length="492" mass="57108">MLEVGTIWGFTSTTMASIMFLWPMYKQFVPYQLREYLENTIQKYLDKLFRRDSNFVYIRFPEYTGEGLSKSRAYDEIGNYLSSISTARAKRLKAKESENSKSLVLCLDDDEAVVVVFQGVNVVWSSTVVDKEDKHNSKEGRYLTLTFENHHRDIITNTYIDHVLREGKEIALKNRERKLYTNNDSSSYSSWWEGLWSNVPFNHHASFETLGMDLDKKEEIKKDLIKFTKGKDYYRKVAKPWKRGYLLFGPPGTGKSTMISAIANFLEYDVYDLELTTVKDNAELKKLMLDTKGKSIVVIEDIDCSLELTEHRKKKKEEDEDKEEKKEAENLKRVSGNNESNVTLSGLLNAIDGLWSACSDEKIIIFTTNFVDNLDPALIRRGRMDYHIEMSYCRFEAFKVLAKNYLENESHDLYGEIGRLLEEVDVSPADVAENLMPKSDEDDADICFRRLVKSLEEEKKKKIEKEARKNKKKAEDNVKQEKQNKVKGMVTK</sequence>